<protein>
    <recommendedName>
        <fullName evidence="1">Photosystem II reaction center protein Psb30</fullName>
    </recommendedName>
    <alternativeName>
        <fullName evidence="1">Photosystem II reaction center protein Ycf12</fullName>
    </alternativeName>
</protein>
<sequence length="35" mass="3823">MFGQYEVFVQLALLALIVLAGPAVILLLYLRGADM</sequence>
<keyword id="KW-0472">Membrane</keyword>
<keyword id="KW-0602">Photosynthesis</keyword>
<keyword id="KW-0604">Photosystem II</keyword>
<keyword id="KW-1185">Reference proteome</keyword>
<keyword id="KW-0793">Thylakoid</keyword>
<keyword id="KW-0812">Transmembrane</keyword>
<keyword id="KW-1133">Transmembrane helix</keyword>
<organism>
    <name type="scientific">Synechococcus sp. (strain JA-2-3B'a(2-13))</name>
    <name type="common">Cyanobacteria bacterium Yellowstone B-Prime</name>
    <dbReference type="NCBI Taxonomy" id="321332"/>
    <lineage>
        <taxon>Bacteria</taxon>
        <taxon>Bacillati</taxon>
        <taxon>Cyanobacteriota</taxon>
        <taxon>Cyanophyceae</taxon>
        <taxon>Synechococcales</taxon>
        <taxon>Synechococcaceae</taxon>
        <taxon>Synechococcus</taxon>
    </lineage>
</organism>
<feature type="chain" id="PRO_0000242479" description="Photosystem II reaction center protein Psb30">
    <location>
        <begin position="1"/>
        <end position="35"/>
    </location>
</feature>
<feature type="transmembrane region" description="Helical" evidence="1">
    <location>
        <begin position="7"/>
        <end position="27"/>
    </location>
</feature>
<comment type="function">
    <text evidence="1">A core subunit of photosystem II (PSII), probably helps stabilize the reaction center.</text>
</comment>
<comment type="subunit">
    <text evidence="1">PSII is composed of 1 copy each of membrane proteins PsbA, PsbB, PsbC, PsbD, PsbE, PsbF, PsbH, PsbI, PsbJ, PsbK, PsbL, PsbM, PsbT, PsbX, PsbY, PsbZ, Psb30/Ycf12, peripheral proteins PsbO, CyanoQ (PsbQ), PsbU, PsbV and a large number of cofactors. It forms dimeric complexes.</text>
</comment>
<comment type="subcellular location">
    <subcellularLocation>
        <location evidence="1">Cellular thylakoid membrane</location>
        <topology evidence="1">Single-pass membrane protein</topology>
    </subcellularLocation>
</comment>
<comment type="similarity">
    <text evidence="1">Belongs to the Psb30/Ycf12 family.</text>
</comment>
<accession>Q2JJG7</accession>
<evidence type="ECO:0000255" key="1">
    <source>
        <dbReference type="HAMAP-Rule" id="MF_01329"/>
    </source>
</evidence>
<proteinExistence type="inferred from homology"/>
<name>PSB30_SYNJB</name>
<gene>
    <name evidence="1" type="primary">psb30</name>
    <name evidence="1" type="synonym">ycf12</name>
    <name type="ordered locus">CYB_2259</name>
</gene>
<dbReference type="EMBL" id="CP000240">
    <property type="protein sequence ID" value="ABD03200.1"/>
    <property type="molecule type" value="Genomic_DNA"/>
</dbReference>
<dbReference type="RefSeq" id="WP_011433833.1">
    <property type="nucleotide sequence ID" value="NC_007776.1"/>
</dbReference>
<dbReference type="SMR" id="Q2JJG7"/>
<dbReference type="STRING" id="321332.CYB_2259"/>
<dbReference type="KEGG" id="cyb:CYB_2259"/>
<dbReference type="eggNOG" id="ENOG5030U32">
    <property type="taxonomic scope" value="Bacteria"/>
</dbReference>
<dbReference type="HOGENOM" id="CLU_196761_1_1_3"/>
<dbReference type="Proteomes" id="UP000001938">
    <property type="component" value="Chromosome"/>
</dbReference>
<dbReference type="GO" id="GO:0009523">
    <property type="term" value="C:photosystem II"/>
    <property type="evidence" value="ECO:0007669"/>
    <property type="project" value="UniProtKB-KW"/>
</dbReference>
<dbReference type="GO" id="GO:0031676">
    <property type="term" value="C:plasma membrane-derived thylakoid membrane"/>
    <property type="evidence" value="ECO:0007669"/>
    <property type="project" value="UniProtKB-SubCell"/>
</dbReference>
<dbReference type="GO" id="GO:0015979">
    <property type="term" value="P:photosynthesis"/>
    <property type="evidence" value="ECO:0007669"/>
    <property type="project" value="UniProtKB-KW"/>
</dbReference>
<dbReference type="HAMAP" id="MF_01329">
    <property type="entry name" value="PSII_Psb30_Ycf12"/>
    <property type="match status" value="1"/>
</dbReference>
<dbReference type="InterPro" id="IPR010284">
    <property type="entry name" value="PSII_Ycf12_core-subunit"/>
</dbReference>
<dbReference type="NCBIfam" id="NF010239">
    <property type="entry name" value="PRK13686.1"/>
    <property type="match status" value="1"/>
</dbReference>
<dbReference type="Pfam" id="PF05969">
    <property type="entry name" value="PSII_Ycf12"/>
    <property type="match status" value="1"/>
</dbReference>
<reference key="1">
    <citation type="journal article" date="2007" name="ISME J.">
        <title>Population level functional diversity in a microbial community revealed by comparative genomic and metagenomic analyses.</title>
        <authorList>
            <person name="Bhaya D."/>
            <person name="Grossman A.R."/>
            <person name="Steunou A.-S."/>
            <person name="Khuri N."/>
            <person name="Cohan F.M."/>
            <person name="Hamamura N."/>
            <person name="Melendrez M.C."/>
            <person name="Bateson M.M."/>
            <person name="Ward D.M."/>
            <person name="Heidelberg J.F."/>
        </authorList>
    </citation>
    <scope>NUCLEOTIDE SEQUENCE [LARGE SCALE GENOMIC DNA]</scope>
    <source>
        <strain>JA-2-3B'a(2-13)</strain>
    </source>
</reference>